<feature type="chain" id="PRO_0000416550" description="Nonribosomal peptide synthetase 9">
    <location>
        <begin position="1"/>
        <end position="1135"/>
    </location>
</feature>
<feature type="domain" description="Carrier" evidence="1">
    <location>
        <begin position="672"/>
        <end position="748"/>
    </location>
</feature>
<feature type="region of interest" description="Condensation 1">
    <location>
        <begin position="23"/>
        <end position="77"/>
    </location>
</feature>
<feature type="region of interest" description="Adenylation">
    <location>
        <begin position="177"/>
        <end position="562"/>
    </location>
</feature>
<feature type="region of interest" description="Disordered" evidence="2">
    <location>
        <begin position="485"/>
        <end position="507"/>
    </location>
</feature>
<feature type="region of interest" description="Condensation 2">
    <location>
        <begin position="746"/>
        <end position="999"/>
    </location>
</feature>
<feature type="compositionally biased region" description="Low complexity" evidence="2">
    <location>
        <begin position="491"/>
        <end position="502"/>
    </location>
</feature>
<feature type="modified residue" description="O-(pantetheine 4'-phosphoryl)serine" evidence="1">
    <location>
        <position position="709"/>
    </location>
</feature>
<gene>
    <name type="primary">NRPS9</name>
    <name type="synonym">pesJ</name>
    <name type="ORF">AFUA_6G09610</name>
</gene>
<keyword id="KW-0436">Ligase</keyword>
<keyword id="KW-0596">Phosphopantetheine</keyword>
<keyword id="KW-0597">Phosphoprotein</keyword>
<keyword id="KW-1185">Reference proteome</keyword>
<keyword id="KW-0677">Repeat</keyword>
<keyword id="KW-0843">Virulence</keyword>
<reference key="1">
    <citation type="journal article" date="2005" name="Nature">
        <title>Genomic sequence of the pathogenic and allergenic filamentous fungus Aspergillus fumigatus.</title>
        <authorList>
            <person name="Nierman W.C."/>
            <person name="Pain A."/>
            <person name="Anderson M.J."/>
            <person name="Wortman J.R."/>
            <person name="Kim H.S."/>
            <person name="Arroyo J."/>
            <person name="Berriman M."/>
            <person name="Abe K."/>
            <person name="Archer D.B."/>
            <person name="Bermejo C."/>
            <person name="Bennett J.W."/>
            <person name="Bowyer P."/>
            <person name="Chen D."/>
            <person name="Collins M."/>
            <person name="Coulsen R."/>
            <person name="Davies R."/>
            <person name="Dyer P.S."/>
            <person name="Farman M.L."/>
            <person name="Fedorova N."/>
            <person name="Fedorova N.D."/>
            <person name="Feldblyum T.V."/>
            <person name="Fischer R."/>
            <person name="Fosker N."/>
            <person name="Fraser A."/>
            <person name="Garcia J.L."/>
            <person name="Garcia M.J."/>
            <person name="Goble A."/>
            <person name="Goldman G.H."/>
            <person name="Gomi K."/>
            <person name="Griffith-Jones S."/>
            <person name="Gwilliam R."/>
            <person name="Haas B.J."/>
            <person name="Haas H."/>
            <person name="Harris D.E."/>
            <person name="Horiuchi H."/>
            <person name="Huang J."/>
            <person name="Humphray S."/>
            <person name="Jimenez J."/>
            <person name="Keller N."/>
            <person name="Khouri H."/>
            <person name="Kitamoto K."/>
            <person name="Kobayashi T."/>
            <person name="Konzack S."/>
            <person name="Kulkarni R."/>
            <person name="Kumagai T."/>
            <person name="Lafton A."/>
            <person name="Latge J.-P."/>
            <person name="Li W."/>
            <person name="Lord A."/>
            <person name="Lu C."/>
            <person name="Majoros W.H."/>
            <person name="May G.S."/>
            <person name="Miller B.L."/>
            <person name="Mohamoud Y."/>
            <person name="Molina M."/>
            <person name="Monod M."/>
            <person name="Mouyna I."/>
            <person name="Mulligan S."/>
            <person name="Murphy L.D."/>
            <person name="O'Neil S."/>
            <person name="Paulsen I."/>
            <person name="Penalva M.A."/>
            <person name="Pertea M."/>
            <person name="Price C."/>
            <person name="Pritchard B.L."/>
            <person name="Quail M.A."/>
            <person name="Rabbinowitsch E."/>
            <person name="Rawlins N."/>
            <person name="Rajandream M.A."/>
            <person name="Reichard U."/>
            <person name="Renauld H."/>
            <person name="Robson G.D."/>
            <person name="Rodriguez de Cordoba S."/>
            <person name="Rodriguez-Pena J.M."/>
            <person name="Ronning C.M."/>
            <person name="Rutter S."/>
            <person name="Salzberg S.L."/>
            <person name="Sanchez M."/>
            <person name="Sanchez-Ferrero J.C."/>
            <person name="Saunders D."/>
            <person name="Seeger K."/>
            <person name="Squares R."/>
            <person name="Squares S."/>
            <person name="Takeuchi M."/>
            <person name="Tekaia F."/>
            <person name="Turner G."/>
            <person name="Vazquez de Aldana C.R."/>
            <person name="Weidman J."/>
            <person name="White O."/>
            <person name="Woodward J.R."/>
            <person name="Yu J.-H."/>
            <person name="Fraser C.M."/>
            <person name="Galagan J.E."/>
            <person name="Asai K."/>
            <person name="Machida M."/>
            <person name="Hall N."/>
            <person name="Barrell B.G."/>
            <person name="Denning D.W."/>
        </authorList>
    </citation>
    <scope>NUCLEOTIDE SEQUENCE [LARGE SCALE GENOMIC DNA]</scope>
    <source>
        <strain>ATCC MYA-4609 / CBS 101355 / FGSC A1100 / Af293</strain>
    </source>
</reference>
<reference key="2">
    <citation type="journal article" date="2006" name="Gene">
        <title>Phylogenomic analysis of non-ribosomal peptide synthetases in the genus Aspergillus.</title>
        <authorList>
            <person name="Cramer R.A. Jr."/>
            <person name="Stajich J.E."/>
            <person name="Yamanaka Y."/>
            <person name="Dietrich F.S."/>
            <person name="Steinbach W.J."/>
            <person name="Perfect J.R."/>
        </authorList>
    </citation>
    <scope>NOMENCLATURE</scope>
</reference>
<reference key="3">
    <citation type="journal article" date="2007" name="Microbiology">
        <title>Nonribosomal peptide synthesis in Aspergillus fumigatus and other fungi.</title>
        <authorList>
            <person name="Stack D."/>
            <person name="Neville C."/>
            <person name="Doyle S."/>
        </authorList>
    </citation>
    <scope>REVIEW ON FUNCTION</scope>
    <scope>DOMAIN</scope>
</reference>
<accession>Q4WMK2</accession>
<dbReference type="EC" id="6.3.2.-"/>
<dbReference type="EMBL" id="AAHF01000006">
    <property type="protein sequence ID" value="EAL88812.1"/>
    <property type="molecule type" value="Genomic_DNA"/>
</dbReference>
<dbReference type="RefSeq" id="XP_750850.1">
    <property type="nucleotide sequence ID" value="XM_745757.1"/>
</dbReference>
<dbReference type="SMR" id="Q4WMK2"/>
<dbReference type="STRING" id="330879.Q4WMK2"/>
<dbReference type="EnsemblFungi" id="EAL88812">
    <property type="protein sequence ID" value="EAL88812"/>
    <property type="gene ID" value="AFUA_6G09610"/>
</dbReference>
<dbReference type="GeneID" id="3508148"/>
<dbReference type="KEGG" id="afm:AFUA_6G09610"/>
<dbReference type="VEuPathDB" id="FungiDB:Afu6g09610"/>
<dbReference type="eggNOG" id="KOG1178">
    <property type="taxonomic scope" value="Eukaryota"/>
</dbReference>
<dbReference type="HOGENOM" id="CLU_000022_60_3_1"/>
<dbReference type="InParanoid" id="Q4WMK2"/>
<dbReference type="OMA" id="GHIAAHS"/>
<dbReference type="OrthoDB" id="416786at2759"/>
<dbReference type="Proteomes" id="UP000002530">
    <property type="component" value="Chromosome 6"/>
</dbReference>
<dbReference type="GO" id="GO:0005737">
    <property type="term" value="C:cytoplasm"/>
    <property type="evidence" value="ECO:0000318"/>
    <property type="project" value="GO_Central"/>
</dbReference>
<dbReference type="GO" id="GO:0016874">
    <property type="term" value="F:ligase activity"/>
    <property type="evidence" value="ECO:0007669"/>
    <property type="project" value="UniProtKB-KW"/>
</dbReference>
<dbReference type="GO" id="GO:0031177">
    <property type="term" value="F:phosphopantetheine binding"/>
    <property type="evidence" value="ECO:0000318"/>
    <property type="project" value="GO_Central"/>
</dbReference>
<dbReference type="GO" id="GO:0043041">
    <property type="term" value="P:amino acid activation for nonribosomal peptide biosynthetic process"/>
    <property type="evidence" value="ECO:0000318"/>
    <property type="project" value="GO_Central"/>
</dbReference>
<dbReference type="GO" id="GO:0019184">
    <property type="term" value="P:nonribosomal peptide biosynthetic process"/>
    <property type="evidence" value="ECO:0000255"/>
    <property type="project" value="AspGD"/>
</dbReference>
<dbReference type="GO" id="GO:0019748">
    <property type="term" value="P:secondary metabolic process"/>
    <property type="evidence" value="ECO:0000303"/>
    <property type="project" value="AspGD"/>
</dbReference>
<dbReference type="GO" id="GO:0044550">
    <property type="term" value="P:secondary metabolite biosynthetic process"/>
    <property type="evidence" value="ECO:0000318"/>
    <property type="project" value="GO_Central"/>
</dbReference>
<dbReference type="CDD" id="cd05918">
    <property type="entry name" value="A_NRPS_SidN3_like"/>
    <property type="match status" value="1"/>
</dbReference>
<dbReference type="CDD" id="cd19534">
    <property type="entry name" value="E_NRPS"/>
    <property type="match status" value="1"/>
</dbReference>
<dbReference type="FunFam" id="3.30.559.30:FF:000002">
    <property type="entry name" value="Nonribosomal peptide synthase Pes1"/>
    <property type="match status" value="1"/>
</dbReference>
<dbReference type="FunFam" id="3.30.300.30:FF:000015">
    <property type="entry name" value="Nonribosomal peptide synthase SidD"/>
    <property type="match status" value="1"/>
</dbReference>
<dbReference type="FunFam" id="3.40.50.12780:FF:000110">
    <property type="entry name" value="Nonribosomal peptide synthase, putative"/>
    <property type="match status" value="1"/>
</dbReference>
<dbReference type="FunFam" id="1.10.1200.10:FF:000005">
    <property type="entry name" value="Nonribosomal peptide synthetase 1"/>
    <property type="match status" value="1"/>
</dbReference>
<dbReference type="Gene3D" id="3.30.300.30">
    <property type="match status" value="1"/>
</dbReference>
<dbReference type="Gene3D" id="1.10.1200.10">
    <property type="entry name" value="ACP-like"/>
    <property type="match status" value="1"/>
</dbReference>
<dbReference type="Gene3D" id="3.30.559.10">
    <property type="entry name" value="Chloramphenicol acetyltransferase-like domain"/>
    <property type="match status" value="1"/>
</dbReference>
<dbReference type="Gene3D" id="3.40.50.12780">
    <property type="entry name" value="N-terminal domain of ligase-like"/>
    <property type="match status" value="1"/>
</dbReference>
<dbReference type="Gene3D" id="3.30.559.30">
    <property type="entry name" value="Nonribosomal peptide synthetase, condensation domain"/>
    <property type="match status" value="2"/>
</dbReference>
<dbReference type="InterPro" id="IPR036736">
    <property type="entry name" value="ACP-like_sf"/>
</dbReference>
<dbReference type="InterPro" id="IPR045851">
    <property type="entry name" value="AMP-bd_C_sf"/>
</dbReference>
<dbReference type="InterPro" id="IPR020845">
    <property type="entry name" value="AMP-binding_CS"/>
</dbReference>
<dbReference type="InterPro" id="IPR000873">
    <property type="entry name" value="AMP-dep_synth/lig_dom"/>
</dbReference>
<dbReference type="InterPro" id="IPR042099">
    <property type="entry name" value="ANL_N_sf"/>
</dbReference>
<dbReference type="InterPro" id="IPR023213">
    <property type="entry name" value="CAT-like_dom_sf"/>
</dbReference>
<dbReference type="InterPro" id="IPR001242">
    <property type="entry name" value="Condensatn"/>
</dbReference>
<dbReference type="InterPro" id="IPR009081">
    <property type="entry name" value="PP-bd_ACP"/>
</dbReference>
<dbReference type="InterPro" id="IPR006162">
    <property type="entry name" value="Ppantetheine_attach_site"/>
</dbReference>
<dbReference type="PANTHER" id="PTHR45527">
    <property type="entry name" value="NONRIBOSOMAL PEPTIDE SYNTHETASE"/>
    <property type="match status" value="1"/>
</dbReference>
<dbReference type="PANTHER" id="PTHR45527:SF12">
    <property type="entry name" value="NONRIBOSOMAL PEPTIDE SYNTHETASE IVOA"/>
    <property type="match status" value="1"/>
</dbReference>
<dbReference type="Pfam" id="PF00501">
    <property type="entry name" value="AMP-binding"/>
    <property type="match status" value="1"/>
</dbReference>
<dbReference type="Pfam" id="PF00668">
    <property type="entry name" value="Condensation"/>
    <property type="match status" value="2"/>
</dbReference>
<dbReference type="Pfam" id="PF00550">
    <property type="entry name" value="PP-binding"/>
    <property type="match status" value="1"/>
</dbReference>
<dbReference type="SUPFAM" id="SSF56801">
    <property type="entry name" value="Acetyl-CoA synthetase-like"/>
    <property type="match status" value="1"/>
</dbReference>
<dbReference type="SUPFAM" id="SSF47336">
    <property type="entry name" value="ACP-like"/>
    <property type="match status" value="1"/>
</dbReference>
<dbReference type="SUPFAM" id="SSF52777">
    <property type="entry name" value="CoA-dependent acyltransferases"/>
    <property type="match status" value="3"/>
</dbReference>
<dbReference type="PROSITE" id="PS00455">
    <property type="entry name" value="AMP_BINDING"/>
    <property type="match status" value="1"/>
</dbReference>
<dbReference type="PROSITE" id="PS50075">
    <property type="entry name" value="CARRIER"/>
    <property type="match status" value="1"/>
</dbReference>
<dbReference type="PROSITE" id="PS00012">
    <property type="entry name" value="PHOSPHOPANTETHEINE"/>
    <property type="match status" value="1"/>
</dbReference>
<organism>
    <name type="scientific">Aspergillus fumigatus (strain ATCC MYA-4609 / CBS 101355 / FGSC A1100 / Af293)</name>
    <name type="common">Neosartorya fumigata</name>
    <dbReference type="NCBI Taxonomy" id="330879"/>
    <lineage>
        <taxon>Eukaryota</taxon>
        <taxon>Fungi</taxon>
        <taxon>Dikarya</taxon>
        <taxon>Ascomycota</taxon>
        <taxon>Pezizomycotina</taxon>
        <taxon>Eurotiomycetes</taxon>
        <taxon>Eurotiomycetidae</taxon>
        <taxon>Eurotiales</taxon>
        <taxon>Aspergillaceae</taxon>
        <taxon>Aspergillus</taxon>
        <taxon>Aspergillus subgen. Fumigati</taxon>
    </lineage>
</organism>
<name>NRPS9_ASPFU</name>
<comment type="function">
    <text>Nonribosomal peptide synthesis (NRPS) is a key mechanism responsible for the biosynthesis of bioactive metabolites which are potentially contributing to organismal virulence.</text>
</comment>
<comment type="domain">
    <text evidence="3">NRP synthetases are composed of discrete domains (adenylation (A), thiolation (T) or peptidyl carrier protein (PCP) and condensation (C) domains) which when grouped together are referred to as a single module. Each module is responsible for the recognition (via the A domain) and incorporation of a single amino acid into the growing peptide product. Thus, an NRP synthetase is generally composed of one or more modules and can terminate in a thioesterase domain (TE) that releases the newly synthesized peptide from the enzyme. Occasionally, epimerase (E) domains (responsible for l- to d- amino acid conversion) are present within the NRP synthetase. NRPS9 has the following architecture: C-A-T-C.</text>
</comment>
<comment type="similarity">
    <text evidence="4">Belongs to the NRP synthetase family.</text>
</comment>
<sequence length="1135" mass="125762">MPRSTPVASEQVDFVMKLLGNTTKQITTATYIKLAWAVVISCNTGSNDTVFGITVNGRGAPIDGAGEMTGATIATIPQHGCILRVWSLPRMPAGMISRERVQRLLQHLELVLQDLMADPSCKVGDLPRMSRQEWDQIQRWSGTLPPVSRQCVHEIVNQRSLQFPNACAVSAPDGDLSYAELIRSANAVAAELLVHGVERGNYIPVLFEKCKWSPVAMLGVLKAGAAFVLLDSSYPPQRLHTICGGLKTQIILCSKDMYARAASLGPTAIAIHENAAFLADIPDVTFPVVSPENAAYVVFTSGSTGTPKGAVIDHQSYCSGALAHNRAHVLGRNSRVLQYASYAFDVSIMETLSTLMAGGCVCILSDLERHDHFANSVQRLAVTHAFLTPSTARLLMQRELPSLCVLVLGGEAMSLADRSYWMSRVRLMNEYGIAECSVASTIREVSHVEQKDIGFPMGVVAWVVDQNDHEKLVAIGATGELLLEGPSPPVGRSSSNRAGSGRCAMGSQAGSYKTGDLVRYNEDGSLSFISRKDSQIKIRGQRFELEEVEQHLRRIDEIQEATTVVAAPSDRPKQPYLVAFIVPRARESFCVCSARALIPHPTEEFRLQAATIQTKLHSILPAHMVPAIYLPVNRMPKTSSDKIDRCRLKEEVGKWSWSDLRAYSVSSMSHRAPSNRVEQDLQRVWEQILGILLDSVGVEDSFFHLGGDSIIAMQVVAEARSRGLDHSVQDINQLKTIKAIANKIGDVQRAAIKLVQNHAMLRARYVRQKDGAWKQFFTGYTEQCFRFSVHQVKSAQEMRQIIGESQTSLNPEHGPVFTVDLFHHGGEQSLLMIGHHLVLDLVSWRIILADMEAMILDPQHQPHLTMSFQTWAHLQAEYGTRHLEPPPGQQPCSIDEPSMRQFWGAENNANTGGDSKTRLIRMNDDLTRKLFGPSSQALDVEPVELLHAAILFSFVNTFPQRPALVIFGEAHGRETWDSSVDVTRTIGWFTTLWPVVAQVNPSDSLETVARTVRQARRAMDMHGWTHFTSVYHNTRQTKRSAGAHLMEITFNYAGKFQQVEQDGSLFRMEPMAKQNLFDGAAELGRWAMLEINSVILNGLLEFHVPYNRGTDEARVLTPWMDNLVKCLEGLASGFA</sequence>
<protein>
    <recommendedName>
        <fullName>Nonribosomal peptide synthetase 9</fullName>
        <ecNumber>6.3.2.-</ecNumber>
    </recommendedName>
</protein>
<evidence type="ECO:0000255" key="1">
    <source>
        <dbReference type="PROSITE-ProRule" id="PRU00258"/>
    </source>
</evidence>
<evidence type="ECO:0000256" key="2">
    <source>
        <dbReference type="SAM" id="MobiDB-lite"/>
    </source>
</evidence>
<evidence type="ECO:0000269" key="3">
    <source>
    </source>
</evidence>
<evidence type="ECO:0000305" key="4"/>
<proteinExistence type="inferred from homology"/>